<reference key="1">
    <citation type="submission" date="2009-01" db="EMBL/GenBank/DDBJ databases">
        <title>Complete sequence of Diaphorobacter sp. TPSY.</title>
        <authorList>
            <consortium name="US DOE Joint Genome Institute"/>
            <person name="Lucas S."/>
            <person name="Copeland A."/>
            <person name="Lapidus A."/>
            <person name="Glavina del Rio T."/>
            <person name="Tice H."/>
            <person name="Bruce D."/>
            <person name="Goodwin L."/>
            <person name="Pitluck S."/>
            <person name="Chertkov O."/>
            <person name="Brettin T."/>
            <person name="Detter J.C."/>
            <person name="Han C."/>
            <person name="Larimer F."/>
            <person name="Land M."/>
            <person name="Hauser L."/>
            <person name="Kyrpides N."/>
            <person name="Mikhailova N."/>
            <person name="Coates J.D."/>
        </authorList>
    </citation>
    <scope>NUCLEOTIDE SEQUENCE [LARGE SCALE GENOMIC DNA]</scope>
    <source>
        <strain>TPSY</strain>
    </source>
</reference>
<keyword id="KW-0963">Cytoplasm</keyword>
<keyword id="KW-0448">Lipopolysaccharide biosynthesis</keyword>
<keyword id="KW-1185">Reference proteome</keyword>
<keyword id="KW-0808">Transferase</keyword>
<evidence type="ECO:0000255" key="1">
    <source>
        <dbReference type="HAMAP-Rule" id="MF_00056"/>
    </source>
</evidence>
<dbReference type="EC" id="2.5.1.55" evidence="1"/>
<dbReference type="EMBL" id="CP001392">
    <property type="protein sequence ID" value="ACM32392.1"/>
    <property type="molecule type" value="Genomic_DNA"/>
</dbReference>
<dbReference type="RefSeq" id="WP_015912645.1">
    <property type="nucleotide sequence ID" value="NC_011992.1"/>
</dbReference>
<dbReference type="SMR" id="B9MEQ6"/>
<dbReference type="KEGG" id="dia:Dtpsy_0914"/>
<dbReference type="eggNOG" id="COG2877">
    <property type="taxonomic scope" value="Bacteria"/>
</dbReference>
<dbReference type="HOGENOM" id="CLU_036666_0_0_4"/>
<dbReference type="UniPathway" id="UPA00030"/>
<dbReference type="UniPathway" id="UPA00357">
    <property type="reaction ID" value="UER00474"/>
</dbReference>
<dbReference type="Proteomes" id="UP000000450">
    <property type="component" value="Chromosome"/>
</dbReference>
<dbReference type="GO" id="GO:0005737">
    <property type="term" value="C:cytoplasm"/>
    <property type="evidence" value="ECO:0007669"/>
    <property type="project" value="UniProtKB-SubCell"/>
</dbReference>
<dbReference type="GO" id="GO:0008676">
    <property type="term" value="F:3-deoxy-8-phosphooctulonate synthase activity"/>
    <property type="evidence" value="ECO:0007669"/>
    <property type="project" value="UniProtKB-UniRule"/>
</dbReference>
<dbReference type="GO" id="GO:0019294">
    <property type="term" value="P:keto-3-deoxy-D-manno-octulosonic acid biosynthetic process"/>
    <property type="evidence" value="ECO:0007669"/>
    <property type="project" value="UniProtKB-UniRule"/>
</dbReference>
<dbReference type="Gene3D" id="3.20.20.70">
    <property type="entry name" value="Aldolase class I"/>
    <property type="match status" value="1"/>
</dbReference>
<dbReference type="HAMAP" id="MF_00056">
    <property type="entry name" value="KDO8P_synth"/>
    <property type="match status" value="1"/>
</dbReference>
<dbReference type="InterPro" id="IPR013785">
    <property type="entry name" value="Aldolase_TIM"/>
</dbReference>
<dbReference type="InterPro" id="IPR006218">
    <property type="entry name" value="DAHP1/KDSA"/>
</dbReference>
<dbReference type="InterPro" id="IPR006269">
    <property type="entry name" value="KDO8P_synthase"/>
</dbReference>
<dbReference type="NCBIfam" id="TIGR01362">
    <property type="entry name" value="KDO8P_synth"/>
    <property type="match status" value="1"/>
</dbReference>
<dbReference type="NCBIfam" id="NF003543">
    <property type="entry name" value="PRK05198.1"/>
    <property type="match status" value="1"/>
</dbReference>
<dbReference type="PANTHER" id="PTHR21057">
    <property type="entry name" value="PHOSPHO-2-DEHYDRO-3-DEOXYHEPTONATE ALDOLASE"/>
    <property type="match status" value="1"/>
</dbReference>
<dbReference type="Pfam" id="PF00793">
    <property type="entry name" value="DAHP_synth_1"/>
    <property type="match status" value="1"/>
</dbReference>
<dbReference type="SUPFAM" id="SSF51569">
    <property type="entry name" value="Aldolase"/>
    <property type="match status" value="1"/>
</dbReference>
<accession>B9MEQ6</accession>
<organism>
    <name type="scientific">Acidovorax ebreus (strain TPSY)</name>
    <name type="common">Diaphorobacter sp. (strain TPSY)</name>
    <dbReference type="NCBI Taxonomy" id="535289"/>
    <lineage>
        <taxon>Bacteria</taxon>
        <taxon>Pseudomonadati</taxon>
        <taxon>Pseudomonadota</taxon>
        <taxon>Betaproteobacteria</taxon>
        <taxon>Burkholderiales</taxon>
        <taxon>Comamonadaceae</taxon>
        <taxon>Diaphorobacter</taxon>
    </lineage>
</organism>
<comment type="catalytic activity">
    <reaction evidence="1">
        <text>D-arabinose 5-phosphate + phosphoenolpyruvate + H2O = 3-deoxy-alpha-D-manno-2-octulosonate-8-phosphate + phosphate</text>
        <dbReference type="Rhea" id="RHEA:14053"/>
        <dbReference type="ChEBI" id="CHEBI:15377"/>
        <dbReference type="ChEBI" id="CHEBI:43474"/>
        <dbReference type="ChEBI" id="CHEBI:57693"/>
        <dbReference type="ChEBI" id="CHEBI:58702"/>
        <dbReference type="ChEBI" id="CHEBI:85985"/>
        <dbReference type="EC" id="2.5.1.55"/>
    </reaction>
</comment>
<comment type="pathway">
    <text evidence="1">Carbohydrate biosynthesis; 3-deoxy-D-manno-octulosonate biosynthesis; 3-deoxy-D-manno-octulosonate from D-ribulose 5-phosphate: step 2/3.</text>
</comment>
<comment type="pathway">
    <text evidence="1">Bacterial outer membrane biogenesis; lipopolysaccharide biosynthesis.</text>
</comment>
<comment type="subcellular location">
    <subcellularLocation>
        <location evidence="1">Cytoplasm</location>
    </subcellularLocation>
</comment>
<comment type="similarity">
    <text evidence="1">Belongs to the KdsA family.</text>
</comment>
<feature type="chain" id="PRO_1000117774" description="2-dehydro-3-deoxyphosphooctonate aldolase">
    <location>
        <begin position="1"/>
        <end position="285"/>
    </location>
</feature>
<gene>
    <name evidence="1" type="primary">kdsA</name>
    <name type="ordered locus">Dtpsy_0914</name>
</gene>
<proteinExistence type="inferred from homology"/>
<name>KDSA_ACIET</name>
<protein>
    <recommendedName>
        <fullName evidence="1">2-dehydro-3-deoxyphosphooctonate aldolase</fullName>
        <ecNumber evidence="1">2.5.1.55</ecNumber>
    </recommendedName>
    <alternativeName>
        <fullName evidence="1">3-deoxy-D-manno-octulosonic acid 8-phosphate synthase</fullName>
    </alternativeName>
    <alternativeName>
        <fullName evidence="1">KDO-8-phosphate synthase</fullName>
        <shortName evidence="1">KDO 8-P synthase</shortName>
        <shortName evidence="1">KDOPS</shortName>
    </alternativeName>
    <alternativeName>
        <fullName evidence="1">Phospho-2-dehydro-3-deoxyoctonate aldolase</fullName>
    </alternativeName>
</protein>
<sequence length="285" mass="30361">MQLCGFNVGLDQRFFLIAGTCSIEGLEMSLDVAGQLKEACAPLGIPLIYKGSFDKANRSSGTSKRGVGLDAGLKILDEVRRQLQLPILTDVHDTSHVAEVASVVDVLQTPAFLCRQTDFIRAVAQSGKPVNIKKGQFLAPWDMKNVIDKARAAAREVGLSEDRFLACERGVSFGYNNLVADMTSLAEMRNSGAPVVFDVTHSVQKPGGLGAVSGGARDMVPVLARAGVAVGVAGLFMETHPKPAEAWSDGPNAVPLKHMRALLETLVALDDVTKKNGFLENNFGA</sequence>